<accession>Q2SZ01</accession>
<name>NADK_BURTA</name>
<feature type="chain" id="PRO_1000005395" description="NAD kinase">
    <location>
        <begin position="1"/>
        <end position="299"/>
    </location>
</feature>
<feature type="active site" description="Proton acceptor" evidence="1">
    <location>
        <position position="75"/>
    </location>
</feature>
<feature type="binding site" evidence="1">
    <location>
        <begin position="75"/>
        <end position="76"/>
    </location>
    <ligand>
        <name>NAD(+)</name>
        <dbReference type="ChEBI" id="CHEBI:57540"/>
    </ligand>
</feature>
<feature type="binding site" evidence="1">
    <location>
        <begin position="149"/>
        <end position="150"/>
    </location>
    <ligand>
        <name>NAD(+)</name>
        <dbReference type="ChEBI" id="CHEBI:57540"/>
    </ligand>
</feature>
<feature type="binding site" evidence="1">
    <location>
        <position position="177"/>
    </location>
    <ligand>
        <name>NAD(+)</name>
        <dbReference type="ChEBI" id="CHEBI:57540"/>
    </ligand>
</feature>
<feature type="binding site" evidence="1">
    <location>
        <position position="179"/>
    </location>
    <ligand>
        <name>NAD(+)</name>
        <dbReference type="ChEBI" id="CHEBI:57540"/>
    </ligand>
</feature>
<feature type="binding site" evidence="1">
    <location>
        <begin position="190"/>
        <end position="195"/>
    </location>
    <ligand>
        <name>NAD(+)</name>
        <dbReference type="ChEBI" id="CHEBI:57540"/>
    </ligand>
</feature>
<feature type="binding site" evidence="1">
    <location>
        <position position="214"/>
    </location>
    <ligand>
        <name>NAD(+)</name>
        <dbReference type="ChEBI" id="CHEBI:57540"/>
    </ligand>
</feature>
<feature type="binding site" evidence="1">
    <location>
        <position position="248"/>
    </location>
    <ligand>
        <name>NAD(+)</name>
        <dbReference type="ChEBI" id="CHEBI:57540"/>
    </ligand>
</feature>
<protein>
    <recommendedName>
        <fullName evidence="1">NAD kinase</fullName>
        <ecNumber evidence="1">2.7.1.23</ecNumber>
    </recommendedName>
    <alternativeName>
        <fullName evidence="1">ATP-dependent NAD kinase</fullName>
    </alternativeName>
</protein>
<keyword id="KW-0067">ATP-binding</keyword>
<keyword id="KW-0963">Cytoplasm</keyword>
<keyword id="KW-0418">Kinase</keyword>
<keyword id="KW-0520">NAD</keyword>
<keyword id="KW-0521">NADP</keyword>
<keyword id="KW-0547">Nucleotide-binding</keyword>
<keyword id="KW-0808">Transferase</keyword>
<organism>
    <name type="scientific">Burkholderia thailandensis (strain ATCC 700388 / DSM 13276 / CCUG 48851 / CIP 106301 / E264)</name>
    <dbReference type="NCBI Taxonomy" id="271848"/>
    <lineage>
        <taxon>Bacteria</taxon>
        <taxon>Pseudomonadati</taxon>
        <taxon>Pseudomonadota</taxon>
        <taxon>Betaproteobacteria</taxon>
        <taxon>Burkholderiales</taxon>
        <taxon>Burkholderiaceae</taxon>
        <taxon>Burkholderia</taxon>
        <taxon>pseudomallei group</taxon>
    </lineage>
</organism>
<proteinExistence type="inferred from homology"/>
<sequence length="299" mass="32449">MKIGHQFHTVALVGRSNTPGIAEPLASLAACIAKRGFEVVFEADTAQALGSTGYPALTPAEIGARADVAVVLGGDGTMLGIGRQLAPYKTPLIGINHGRLGFITDIPASDMQEVVPMMLAGSYEREERTLLEARIVRNNEPIYHALAFNDVVVNRSGFSGMAELRVSVDGRFMYNQRSDGLIVATPTGSTAYALSSQGPILHPQLQGIVLVPIAPHALSNRPIVLPDDSKIAIQIIGGRDVNVNFDMQSFTALELNDTIEVRRSKHTVPFLHPVGYSYYATLRKKLHWNEHPSNEEDDE</sequence>
<evidence type="ECO:0000255" key="1">
    <source>
        <dbReference type="HAMAP-Rule" id="MF_00361"/>
    </source>
</evidence>
<dbReference type="EC" id="2.7.1.23" evidence="1"/>
<dbReference type="EMBL" id="CP000086">
    <property type="protein sequence ID" value="ABC38385.1"/>
    <property type="molecule type" value="Genomic_DNA"/>
</dbReference>
<dbReference type="RefSeq" id="WP_009889241.1">
    <property type="nucleotide sequence ID" value="NZ_CP008785.1"/>
</dbReference>
<dbReference type="SMR" id="Q2SZ01"/>
<dbReference type="GeneID" id="45121046"/>
<dbReference type="KEGG" id="bte:BTH_I1301"/>
<dbReference type="HOGENOM" id="CLU_008831_0_1_4"/>
<dbReference type="Proteomes" id="UP000001930">
    <property type="component" value="Chromosome I"/>
</dbReference>
<dbReference type="GO" id="GO:0005737">
    <property type="term" value="C:cytoplasm"/>
    <property type="evidence" value="ECO:0007669"/>
    <property type="project" value="UniProtKB-SubCell"/>
</dbReference>
<dbReference type="GO" id="GO:0005524">
    <property type="term" value="F:ATP binding"/>
    <property type="evidence" value="ECO:0007669"/>
    <property type="project" value="UniProtKB-KW"/>
</dbReference>
<dbReference type="GO" id="GO:0046872">
    <property type="term" value="F:metal ion binding"/>
    <property type="evidence" value="ECO:0007669"/>
    <property type="project" value="UniProtKB-UniRule"/>
</dbReference>
<dbReference type="GO" id="GO:0051287">
    <property type="term" value="F:NAD binding"/>
    <property type="evidence" value="ECO:0007669"/>
    <property type="project" value="UniProtKB-ARBA"/>
</dbReference>
<dbReference type="GO" id="GO:0003951">
    <property type="term" value="F:NAD+ kinase activity"/>
    <property type="evidence" value="ECO:0007669"/>
    <property type="project" value="UniProtKB-UniRule"/>
</dbReference>
<dbReference type="GO" id="GO:0019674">
    <property type="term" value="P:NAD metabolic process"/>
    <property type="evidence" value="ECO:0007669"/>
    <property type="project" value="InterPro"/>
</dbReference>
<dbReference type="GO" id="GO:0006741">
    <property type="term" value="P:NADP biosynthetic process"/>
    <property type="evidence" value="ECO:0007669"/>
    <property type="project" value="UniProtKB-UniRule"/>
</dbReference>
<dbReference type="Gene3D" id="3.40.50.10330">
    <property type="entry name" value="Probable inorganic polyphosphate/atp-NAD kinase, domain 1"/>
    <property type="match status" value="1"/>
</dbReference>
<dbReference type="Gene3D" id="2.60.200.30">
    <property type="entry name" value="Probable inorganic polyphosphate/atp-NAD kinase, domain 2"/>
    <property type="match status" value="1"/>
</dbReference>
<dbReference type="HAMAP" id="MF_00361">
    <property type="entry name" value="NAD_kinase"/>
    <property type="match status" value="1"/>
</dbReference>
<dbReference type="InterPro" id="IPR017438">
    <property type="entry name" value="ATP-NAD_kinase_N"/>
</dbReference>
<dbReference type="InterPro" id="IPR017437">
    <property type="entry name" value="ATP-NAD_kinase_PpnK-typ_C"/>
</dbReference>
<dbReference type="InterPro" id="IPR016064">
    <property type="entry name" value="NAD/diacylglycerol_kinase_sf"/>
</dbReference>
<dbReference type="InterPro" id="IPR002504">
    <property type="entry name" value="NADK"/>
</dbReference>
<dbReference type="NCBIfam" id="NF002561">
    <property type="entry name" value="PRK02155.1"/>
    <property type="match status" value="1"/>
</dbReference>
<dbReference type="PANTHER" id="PTHR20275">
    <property type="entry name" value="NAD KINASE"/>
    <property type="match status" value="1"/>
</dbReference>
<dbReference type="PANTHER" id="PTHR20275:SF0">
    <property type="entry name" value="NAD KINASE"/>
    <property type="match status" value="1"/>
</dbReference>
<dbReference type="Pfam" id="PF01513">
    <property type="entry name" value="NAD_kinase"/>
    <property type="match status" value="1"/>
</dbReference>
<dbReference type="Pfam" id="PF20143">
    <property type="entry name" value="NAD_kinase_C"/>
    <property type="match status" value="1"/>
</dbReference>
<dbReference type="SUPFAM" id="SSF111331">
    <property type="entry name" value="NAD kinase/diacylglycerol kinase-like"/>
    <property type="match status" value="1"/>
</dbReference>
<reference key="1">
    <citation type="journal article" date="2005" name="BMC Genomics">
        <title>Bacterial genome adaptation to niches: divergence of the potential virulence genes in three Burkholderia species of different survival strategies.</title>
        <authorList>
            <person name="Kim H.S."/>
            <person name="Schell M.A."/>
            <person name="Yu Y."/>
            <person name="Ulrich R.L."/>
            <person name="Sarria S.H."/>
            <person name="Nierman W.C."/>
            <person name="DeShazer D."/>
        </authorList>
    </citation>
    <scope>NUCLEOTIDE SEQUENCE [LARGE SCALE GENOMIC DNA]</scope>
    <source>
        <strain>ATCC 700388 / DSM 13276 / CCUG 48851 / CIP 106301 / E264</strain>
    </source>
</reference>
<gene>
    <name evidence="1" type="primary">nadK</name>
    <name type="ordered locus">BTH_I1301</name>
</gene>
<comment type="function">
    <text evidence="1">Involved in the regulation of the intracellular balance of NAD and NADP, and is a key enzyme in the biosynthesis of NADP. Catalyzes specifically the phosphorylation on 2'-hydroxyl of the adenosine moiety of NAD to yield NADP.</text>
</comment>
<comment type="catalytic activity">
    <reaction evidence="1">
        <text>NAD(+) + ATP = ADP + NADP(+) + H(+)</text>
        <dbReference type="Rhea" id="RHEA:18629"/>
        <dbReference type="ChEBI" id="CHEBI:15378"/>
        <dbReference type="ChEBI" id="CHEBI:30616"/>
        <dbReference type="ChEBI" id="CHEBI:57540"/>
        <dbReference type="ChEBI" id="CHEBI:58349"/>
        <dbReference type="ChEBI" id="CHEBI:456216"/>
        <dbReference type="EC" id="2.7.1.23"/>
    </reaction>
</comment>
<comment type="cofactor">
    <cofactor evidence="1">
        <name>a divalent metal cation</name>
        <dbReference type="ChEBI" id="CHEBI:60240"/>
    </cofactor>
</comment>
<comment type="subcellular location">
    <subcellularLocation>
        <location evidence="1">Cytoplasm</location>
    </subcellularLocation>
</comment>
<comment type="similarity">
    <text evidence="1">Belongs to the NAD kinase family.</text>
</comment>